<accession>Q9AJ75</accession>
<name>SCA4_RICPA</name>
<dbReference type="EMBL" id="AF155059">
    <property type="protein sequence ID" value="AAK30690.1"/>
    <property type="molecule type" value="Genomic_DNA"/>
</dbReference>
<dbReference type="SMR" id="Q9AJ75"/>
<dbReference type="GO" id="GO:0005737">
    <property type="term" value="C:cytoplasm"/>
    <property type="evidence" value="ECO:0007669"/>
    <property type="project" value="UniProtKB-SubCell"/>
</dbReference>
<dbReference type="InterPro" id="IPR020954">
    <property type="entry name" value="Rickettsia_antigen_120kDa"/>
</dbReference>
<dbReference type="NCBIfam" id="NF038365">
    <property type="entry name" value="Sca4_fam"/>
    <property type="match status" value="1"/>
</dbReference>
<dbReference type="Pfam" id="PF12574">
    <property type="entry name" value="120_Rick_ant"/>
    <property type="match status" value="1"/>
</dbReference>
<comment type="subcellular location">
    <subcellularLocation>
        <location evidence="2">Cytoplasm</location>
    </subcellularLocation>
</comment>
<sequence>DTSEFDPLANKEYTEEQKQTLEQEQKEFLSQTTTPALEADDGFIVTSASFAQSTPSMSVLSGNISPSQTSDPITKAVRETIIQPQKDNLIEQILKDLAALTDRDLAEQKRKEIEEEKEKDKTLSTFFGNPANREFIDKALENPELKKKLESIEIAGYKNVHNTFSAASGYPGGFKPVQWENHVSASDLRATVVKNDAGDELCTLNETTVKTKPFTLAKQDGTQVQISSYREIDFPIKLDKADGSMHLSMVALKADGTKPSKDKPVYFTAHYEEGPNGKPQLKEISSPKPLKFAGTGDDAIAYIEHGGEIYTLAVTRGKYKDMMKEVELNQGQSVDLSQAEDIIIGQGQSKEQPLITPQQTTSSSVEPPQHKQQVPPITPTNQPLQPETSQMPQSQQVNPNLLNTATALSGSMQDLLNYVNAGLTKEIDSNKQIDLIKEAATAILNNEKSDIVEKQANIIALAENTVNNKNLKPDAKVAGVNAVLEIIKNDQNTPNLEKSKMLEATVAIVLNSENLEPKQKQQMLEKAVDVGLSLKDDASRAATIDGIKDVVIKSNLYTEDKGTMLIAVGDKVNVSELSNAEKQKLLGSVLKKGVEAQVLSPAQQQLMQQHLDKITAEQTKKDTIKKVNDILFDPLSNTELKTTNIQAITSNVLDGPATAEVKGEIIQEITNTVAGSSLEAQDKAEIVKGVGETIATHSDTSLSLPNKALIMASAEKGIAESKTNLPDRELMTKVLVDGIYEGKGGPEITKAVSSGIDNSNINDSEKEALKKAKDAASEAALDRDTQNLTEGFKGQNIEEHKPHDDIYNKAREVINAVNPVIEALEKSKEPVVSAEERIVQETSSILNNISKLAVEKVNNLRSMLSPNGNLKTLEEKKEESIKKVDELVKAFGTKSSTEEQQSFIKTNLIDDKTLSKEVRLQTIDKLLQEQKRAEAIENPSFKTEDVRVVSGKSKLKPISKDNPDIEKAKMVVGRDRVNIKGNIKIMGALMNARDIIQSENLNKSTPIKRE</sequence>
<evidence type="ECO:0000256" key="1">
    <source>
        <dbReference type="SAM" id="MobiDB-lite"/>
    </source>
</evidence>
<evidence type="ECO:0000305" key="2"/>
<keyword id="KW-0963">Cytoplasm</keyword>
<proteinExistence type="predicted"/>
<reference key="1">
    <citation type="journal article" date="2001" name="Int. J. Syst. Evol. Microbiol.">
        <title>Phylogeny of Rickettsia spp. inferred by comparing sequences of 'gene D', which encodes an intracytoplasmic protein.</title>
        <authorList>
            <person name="Sekeyova Z."/>
            <person name="Roux V."/>
            <person name="Raoult D."/>
        </authorList>
    </citation>
    <scope>NUCLEOTIDE SEQUENCE [GENOMIC DNA]</scope>
</reference>
<gene>
    <name type="primary">sca4</name>
    <name type="synonym">D</name>
</gene>
<organism>
    <name type="scientific">Rickettsia parkeri</name>
    <dbReference type="NCBI Taxonomy" id="35792"/>
    <lineage>
        <taxon>Bacteria</taxon>
        <taxon>Pseudomonadati</taxon>
        <taxon>Pseudomonadota</taxon>
        <taxon>Alphaproteobacteria</taxon>
        <taxon>Rickettsiales</taxon>
        <taxon>Rickettsiaceae</taxon>
        <taxon>Rickettsieae</taxon>
        <taxon>Rickettsia</taxon>
        <taxon>spotted fever group</taxon>
    </lineage>
</organism>
<protein>
    <recommendedName>
        <fullName>Antigenic heat-stable 120 kDa protein</fullName>
    </recommendedName>
    <alternativeName>
        <fullName>120 kDa antigen</fullName>
    </alternativeName>
    <alternativeName>
        <fullName>Protein PS 120</fullName>
        <shortName>PS120</shortName>
    </alternativeName>
</protein>
<feature type="chain" id="PRO_0000097614" description="Antigenic heat-stable 120 kDa protein">
    <location>
        <begin position="1" status="less than"/>
        <end position="1010" status="greater than"/>
    </location>
</feature>
<feature type="region of interest" description="Disordered" evidence="1">
    <location>
        <begin position="1"/>
        <end position="34"/>
    </location>
</feature>
<feature type="region of interest" description="Disordered" evidence="1">
    <location>
        <begin position="347"/>
        <end position="396"/>
    </location>
</feature>
<feature type="compositionally biased region" description="Basic and acidic residues" evidence="1">
    <location>
        <begin position="12"/>
        <end position="27"/>
    </location>
</feature>
<feature type="compositionally biased region" description="Polar residues" evidence="1">
    <location>
        <begin position="347"/>
        <end position="372"/>
    </location>
</feature>
<feature type="compositionally biased region" description="Polar residues" evidence="1">
    <location>
        <begin position="379"/>
        <end position="396"/>
    </location>
</feature>
<feature type="non-terminal residue">
    <location>
        <position position="1"/>
    </location>
</feature>
<feature type="non-terminal residue">
    <location>
        <position position="1010"/>
    </location>
</feature>